<accession>Q4UMM0</accession>
<reference key="1">
    <citation type="journal article" date="2005" name="PLoS Biol.">
        <title>The genome sequence of Rickettsia felis identifies the first putative conjugative plasmid in an obligate intracellular parasite.</title>
        <authorList>
            <person name="Ogata H."/>
            <person name="Renesto P."/>
            <person name="Audic S."/>
            <person name="Robert C."/>
            <person name="Blanc G."/>
            <person name="Fournier P.-E."/>
            <person name="Parinello H."/>
            <person name="Claverie J.-M."/>
            <person name="Raoult D."/>
        </authorList>
    </citation>
    <scope>NUCLEOTIDE SEQUENCE [LARGE SCALE GENOMIC DNA]</scope>
    <source>
        <strain>ATCC VR-1525 / URRWXCal2</strain>
    </source>
</reference>
<organism>
    <name type="scientific">Rickettsia felis (strain ATCC VR-1525 / URRWXCal2)</name>
    <name type="common">Rickettsia azadi</name>
    <dbReference type="NCBI Taxonomy" id="315456"/>
    <lineage>
        <taxon>Bacteria</taxon>
        <taxon>Pseudomonadati</taxon>
        <taxon>Pseudomonadota</taxon>
        <taxon>Alphaproteobacteria</taxon>
        <taxon>Rickettsiales</taxon>
        <taxon>Rickettsiaceae</taxon>
        <taxon>Rickettsieae</taxon>
        <taxon>Rickettsia</taxon>
        <taxon>spotted fever group</taxon>
    </lineage>
</organism>
<feature type="chain" id="PRO_0000293141" description="Uncharacterized glycosyltransferase RF_0337">
    <location>
        <begin position="1"/>
        <end position="283"/>
    </location>
</feature>
<evidence type="ECO:0000305" key="1"/>
<comment type="similarity">
    <text evidence="1">Belongs to the glycosyltransferase 2 family. WaaE/KdtX subfamily.</text>
</comment>
<sequence>MEKISAFIITKNEAARIARAINSVKNIVDEVIVVDSESTDDTVAIAEQLGAKVIVKPWLGYVGQKSFAESLCVNDWILNIDADEELSKELQDEIEYIFASHNQDRYLAYQIKLLIMHRNDQKPRMFAPFNKCTRLYNKKFASFANTVNSTTHDSVVFNKDVDFAGKIYLLNEAAYHYSGTSIEQLVTKANFYSSEQAKDLVKQGKKLSNFRLTTEMIWWFFKAFFIRRYFVFGFDGFVDSMIFAFARFLRLAKLRESLLKSKNVIARSEATWQSRKNNKNSTN</sequence>
<gene>
    <name type="ordered locus">RF_0337</name>
</gene>
<dbReference type="EC" id="2.4.-.-"/>
<dbReference type="EMBL" id="CP000053">
    <property type="protein sequence ID" value="AAY61188.1"/>
    <property type="molecule type" value="Genomic_DNA"/>
</dbReference>
<dbReference type="SMR" id="Q4UMM0"/>
<dbReference type="STRING" id="315456.RF_0337"/>
<dbReference type="CAZy" id="GT2">
    <property type="family name" value="Glycosyltransferase Family 2"/>
</dbReference>
<dbReference type="KEGG" id="rfe:RF_0337"/>
<dbReference type="eggNOG" id="COG0463">
    <property type="taxonomic scope" value="Bacteria"/>
</dbReference>
<dbReference type="HOGENOM" id="CLU_065962_1_0_5"/>
<dbReference type="OrthoDB" id="7527830at2"/>
<dbReference type="Proteomes" id="UP000008548">
    <property type="component" value="Chromosome"/>
</dbReference>
<dbReference type="GO" id="GO:0016757">
    <property type="term" value="F:glycosyltransferase activity"/>
    <property type="evidence" value="ECO:0007669"/>
    <property type="project" value="UniProtKB-KW"/>
</dbReference>
<dbReference type="CDD" id="cd02511">
    <property type="entry name" value="Beta4Glucosyltransferase"/>
    <property type="match status" value="1"/>
</dbReference>
<dbReference type="Gene3D" id="3.90.550.10">
    <property type="entry name" value="Spore Coat Polysaccharide Biosynthesis Protein SpsA, Chain A"/>
    <property type="match status" value="1"/>
</dbReference>
<dbReference type="InterPro" id="IPR001173">
    <property type="entry name" value="Glyco_trans_2-like"/>
</dbReference>
<dbReference type="InterPro" id="IPR029044">
    <property type="entry name" value="Nucleotide-diphossugar_trans"/>
</dbReference>
<dbReference type="PANTHER" id="PTHR43630:SF2">
    <property type="entry name" value="GLYCOSYLTRANSFERASE"/>
    <property type="match status" value="1"/>
</dbReference>
<dbReference type="PANTHER" id="PTHR43630">
    <property type="entry name" value="POLY-BETA-1,6-N-ACETYL-D-GLUCOSAMINE SYNTHASE"/>
    <property type="match status" value="1"/>
</dbReference>
<dbReference type="Pfam" id="PF00535">
    <property type="entry name" value="Glycos_transf_2"/>
    <property type="match status" value="1"/>
</dbReference>
<dbReference type="SUPFAM" id="SSF53448">
    <property type="entry name" value="Nucleotide-diphospho-sugar transferases"/>
    <property type="match status" value="1"/>
</dbReference>
<keyword id="KW-0328">Glycosyltransferase</keyword>
<keyword id="KW-0808">Transferase</keyword>
<proteinExistence type="inferred from homology"/>
<name>Y337_RICFE</name>
<protein>
    <recommendedName>
        <fullName>Uncharacterized glycosyltransferase RF_0337</fullName>
        <ecNumber>2.4.-.-</ecNumber>
    </recommendedName>
</protein>